<accession>D4GWY0</accession>
<feature type="propeptide" id="PRO_0000429052" evidence="2">
    <location>
        <begin position="1"/>
        <end position="10"/>
    </location>
</feature>
<feature type="chain" id="PRO_0000429053" description="Flagellin A1">
    <location>
        <begin position="11"/>
        <end position="213"/>
    </location>
</feature>
<feature type="glycosylation site" description="N-linked (GlcNAc...) asparagine" evidence="4">
    <location>
        <position position="70"/>
    </location>
</feature>
<feature type="glycosylation site" description="N-linked (GlcNAc...) asparagine" evidence="4">
    <location>
        <position position="115"/>
    </location>
</feature>
<feature type="glycosylation site" description="N-linked (GlcNAc...) asparagine" evidence="4">
    <location>
        <position position="172"/>
    </location>
</feature>
<feature type="mutagenesis site" description="Defects in flagella motility. Decreased glycosylation." evidence="4">
    <original>N</original>
    <variation>Q</variation>
    <location>
        <position position="70"/>
    </location>
</feature>
<feature type="mutagenesis site" description="Defects in flagella motility. Decreased glycosylation." evidence="4">
    <original>N</original>
    <variation>Q</variation>
    <location>
        <position position="115"/>
    </location>
</feature>
<feature type="mutagenesis site" description="Defects in flagella motility. Decreased glycosylation." evidence="4">
    <original>N</original>
    <variation>Q</variation>
    <location>
        <position position="172"/>
    </location>
</feature>
<evidence type="ECO:0000250" key="1"/>
<evidence type="ECO:0000255" key="2"/>
<evidence type="ECO:0000269" key="3">
    <source>
    </source>
</evidence>
<evidence type="ECO:0000269" key="4">
    <source>
    </source>
</evidence>
<evidence type="ECO:0000305" key="5"/>
<proteinExistence type="evidence at protein level"/>
<organism>
    <name type="scientific">Haloferax volcanii (strain ATCC 29605 / DSM 3757 / JCM 8879 / NBRC 14742 / NCIMB 2012 / VKM B-1768 / DS2)</name>
    <name type="common">Halobacterium volcanii</name>
    <dbReference type="NCBI Taxonomy" id="309800"/>
    <lineage>
        <taxon>Archaea</taxon>
        <taxon>Methanobacteriati</taxon>
        <taxon>Methanobacteriota</taxon>
        <taxon>Stenosarchaea group</taxon>
        <taxon>Halobacteria</taxon>
        <taxon>Halobacteriales</taxon>
        <taxon>Haloferacaceae</taxon>
        <taxon>Haloferax</taxon>
    </lineage>
</organism>
<gene>
    <name type="primary">flgA1</name>
    <name type="ordered locus">HVO_1210</name>
    <name type="ORF">C498_12698</name>
</gene>
<keyword id="KW-0974">Archaeal flagellum</keyword>
<keyword id="KW-0325">Glycoprotein</keyword>
<keyword id="KW-1185">Reference proteome</keyword>
<comment type="function">
    <text evidence="3 4">Major flagellin required for motility. Not involved in PibD-dependent surface adhesion. Much more abundant in cells compared to FlgA2.</text>
</comment>
<comment type="subcellular location">
    <subcellularLocation>
        <location evidence="1">Archaeal flagellum</location>
    </subcellularLocation>
</comment>
<comment type="PTM">
    <text evidence="4">Glycosylated by a pentasaccharide similar to the S-layer glycoprotein, probably comprising a hexose, 2 hexuronic acids, a methyl ester of a hexuronic acid and mannose. Glycosylation is required for biosynthesis of stable flagella.</text>
</comment>
<comment type="disruption phenotype">
    <text evidence="3 4">Cells are non-motile. Cells lacking both flgA1 and flgA2 show defects in motility, whitout affecting surface adhesion ability.</text>
</comment>
<comment type="similarity">
    <text evidence="5">Belongs to the archaeal flagellin family.</text>
</comment>
<reference key="1">
    <citation type="journal article" date="2010" name="PLoS ONE">
        <title>The complete genome sequence of Haloferax volcanii DS2, a model archaeon.</title>
        <authorList>
            <person name="Hartman A.L."/>
            <person name="Norais C."/>
            <person name="Badger J.H."/>
            <person name="Delmas S."/>
            <person name="Haldenby S."/>
            <person name="Madupu R."/>
            <person name="Robinson J."/>
            <person name="Khouri H."/>
            <person name="Ren Q."/>
            <person name="Lowe T.M."/>
            <person name="Maupin-Furlow J."/>
            <person name="Pohlschroder M."/>
            <person name="Daniels C."/>
            <person name="Pfeiffer F."/>
            <person name="Allers T."/>
            <person name="Eisen J.A."/>
        </authorList>
    </citation>
    <scope>NUCLEOTIDE SEQUENCE [LARGE SCALE GENOMIC DNA]</scope>
    <source>
        <strain>ATCC 29605 / DSM 3757 / JCM 8879 / NBRC 14742 / NCIMB 2012 / VKM B-1768 / DS2</strain>
    </source>
</reference>
<reference key="2">
    <citation type="journal article" date="2014" name="PLoS Genet.">
        <title>Phylogenetically driven sequencing of extremely halophilic archaea reveals strategies for static and dynamic osmo-response.</title>
        <authorList>
            <person name="Becker E.A."/>
            <person name="Seitzer P.M."/>
            <person name="Tritt A."/>
            <person name="Larsen D."/>
            <person name="Krusor M."/>
            <person name="Yao A.I."/>
            <person name="Wu D."/>
            <person name="Madern D."/>
            <person name="Eisen J.A."/>
            <person name="Darling A.E."/>
            <person name="Facciotti M.T."/>
        </authorList>
    </citation>
    <scope>NUCLEOTIDE SEQUENCE [LARGE SCALE GENOMIC DNA]</scope>
    <source>
        <strain>ATCC 29605 / DSM 3757 / JCM 8879 / NBRC 14742 / NCIMB 2012 / VKM B-1768 / DS2</strain>
    </source>
</reference>
<reference key="3">
    <citation type="journal article" date="2000" name="Mol. Microbiol.">
        <title>Role of flagellins from A and B loci in flagella formation of Halobacterium salinarum.</title>
        <authorList>
            <person name="Tarasov V.Y."/>
            <person name="Pyatibratov M.G."/>
            <person name="Tang S.L."/>
            <person name="Dyall-Smith M."/>
            <person name="Fedorov O.V."/>
        </authorList>
    </citation>
    <scope>IDENTIFICATION</scope>
    <source>
        <strain>ATCC 29605 / DSM 3757 / JCM 8879 / NBRC 14742 / NCIMB 2012 / VKM B-1768 / DS2</strain>
    </source>
</reference>
<reference key="4">
    <citation type="journal article" date="2010" name="J. Bacteriol.">
        <title>Haloferax volcanii flagella are required for motility but are not involved in PibD-dependent surface adhesion.</title>
        <authorList>
            <person name="Tripepi M."/>
            <person name="Imam S."/>
            <person name="Pohlschroeder M."/>
        </authorList>
    </citation>
    <scope>FUNCTION</scope>
    <scope>DISRUPTION PHENOTYPE</scope>
    <source>
        <strain>ATCC 29605 / DSM 3757 / JCM 8879 / NBRC 14742 / NCIMB 2012 / VKM B-1768 / DS2</strain>
    </source>
</reference>
<reference key="5">
    <citation type="journal article" date="2012" name="J. Bacteriol.">
        <title>N-glycosylation of Haloferax volcanii flagellins requires known Agl proteins and is essential for biosynthesis of stable flagella.</title>
        <authorList>
            <person name="Tripepi M."/>
            <person name="You J."/>
            <person name="Temel S."/>
            <person name="Onder O."/>
            <person name="Brisson D."/>
            <person name="Pohlschroder M."/>
        </authorList>
    </citation>
    <scope>FUNCTION</scope>
    <scope>DISRUPTION PHENOTYPE</scope>
    <scope>GLYCOSYLATION AT ASN-70; ASN-115 AND ASN-172</scope>
    <scope>MUTAGENESIS OF ASN-70; ASN-115 AND ASN-172</scope>
    <source>
        <strain>ATCC 29605 / DSM 3757 / JCM 8879 / NBRC 14742 / NCIMB 2012 / VKM B-1768 / DS2</strain>
    </source>
</reference>
<protein>
    <recommendedName>
        <fullName>Flagellin A1</fullName>
    </recommendedName>
</protein>
<dbReference type="EMBL" id="CP001956">
    <property type="protein sequence ID" value="ADE02581.1"/>
    <property type="molecule type" value="Genomic_DNA"/>
</dbReference>
<dbReference type="EMBL" id="AOHU01000091">
    <property type="protein sequence ID" value="ELY28105.1"/>
    <property type="molecule type" value="Genomic_DNA"/>
</dbReference>
<dbReference type="RefSeq" id="WP_004043732.1">
    <property type="nucleotide sequence ID" value="NC_013967.1"/>
</dbReference>
<dbReference type="SMR" id="D4GWY0"/>
<dbReference type="STRING" id="309800.HVO_1210"/>
<dbReference type="GlyCosmos" id="D4GWY0">
    <property type="glycosylation" value="3 sites, No reported glycans"/>
</dbReference>
<dbReference type="iPTMnet" id="D4GWY0"/>
<dbReference type="PaxDb" id="309800-C498_12698"/>
<dbReference type="EnsemblBacteria" id="ADE02581">
    <property type="protein sequence ID" value="ADE02581"/>
    <property type="gene ID" value="HVO_1210"/>
</dbReference>
<dbReference type="GeneID" id="8924829"/>
<dbReference type="KEGG" id="hvo:HVO_1210"/>
<dbReference type="PATRIC" id="fig|309800.29.peg.2432"/>
<dbReference type="eggNOG" id="arCOG01829">
    <property type="taxonomic scope" value="Archaea"/>
</dbReference>
<dbReference type="HOGENOM" id="CLU_051124_1_0_2"/>
<dbReference type="OrthoDB" id="102632at2157"/>
<dbReference type="Proteomes" id="UP000008243">
    <property type="component" value="Chromosome"/>
</dbReference>
<dbReference type="Proteomes" id="UP000011532">
    <property type="component" value="Unassembled WGS sequence"/>
</dbReference>
<dbReference type="GO" id="GO:0097589">
    <property type="term" value="C:archaeal-type flagellum"/>
    <property type="evidence" value="ECO:0007669"/>
    <property type="project" value="UniProtKB-SubCell"/>
</dbReference>
<dbReference type="GO" id="GO:0005198">
    <property type="term" value="F:structural molecule activity"/>
    <property type="evidence" value="ECO:0007669"/>
    <property type="project" value="InterPro"/>
</dbReference>
<dbReference type="GO" id="GO:0097588">
    <property type="term" value="P:archaeal or bacterial-type flagellum-dependent cell motility"/>
    <property type="evidence" value="ECO:0007669"/>
    <property type="project" value="InterPro"/>
</dbReference>
<dbReference type="InterPro" id="IPR013373">
    <property type="entry name" value="Flagellin/pilin_N_arc"/>
</dbReference>
<dbReference type="InterPro" id="IPR002774">
    <property type="entry name" value="Flagellin_arc"/>
</dbReference>
<dbReference type="NCBIfam" id="TIGR02537">
    <property type="entry name" value="arch_flag_Nterm"/>
    <property type="match status" value="1"/>
</dbReference>
<dbReference type="PANTHER" id="PTHR35903">
    <property type="entry name" value="FLAGELLIN B1"/>
    <property type="match status" value="1"/>
</dbReference>
<dbReference type="PANTHER" id="PTHR35903:SF1">
    <property type="entry name" value="FLAGELLIN B1"/>
    <property type="match status" value="1"/>
</dbReference>
<dbReference type="Pfam" id="PF01917">
    <property type="entry name" value="Arch_flagellin"/>
    <property type="match status" value="1"/>
</dbReference>
<sequence>MFENINEDRGQVGIGTLIVFIAMVLVAAIAAGVLVNTAGFLQATAEDAGQQSVNKVTNRVDVVNAHGLVNKTGEERTVDQIFLTVRLAAGSGSVSLEDTTVKYLSETTARTLTYNDTVTGSDTADPANLTTGNNFTAGVLEDGDDSFEVLNEQSDRAEMVINTSTVEGDNTNGTATGQTVKLDITSRNGGTAQVILTMPQQLAGKDNNDPIAL</sequence>
<name>FLGA1_HALVD</name>